<gene>
    <name type="primary">SF3A3</name>
    <name type="synonym">SAP61</name>
</gene>
<dbReference type="EMBL" id="U08815">
    <property type="protein sequence ID" value="AAA19625.1"/>
    <property type="molecule type" value="mRNA"/>
</dbReference>
<dbReference type="EMBL" id="X81789">
    <property type="protein sequence ID" value="CAA57388.1"/>
    <property type="molecule type" value="mRNA"/>
</dbReference>
<dbReference type="EMBL" id="AL603790">
    <property type="status" value="NOT_ANNOTATED_CDS"/>
    <property type="molecule type" value="Genomic_DNA"/>
</dbReference>
<dbReference type="EMBL" id="CH471059">
    <property type="protein sequence ID" value="EAX07304.1"/>
    <property type="molecule type" value="Genomic_DNA"/>
</dbReference>
<dbReference type="EMBL" id="CH471059">
    <property type="protein sequence ID" value="EAX07305.1"/>
    <property type="molecule type" value="Genomic_DNA"/>
</dbReference>
<dbReference type="EMBL" id="BC002395">
    <property type="protein sequence ID" value="AAH02395.1"/>
    <property type="molecule type" value="mRNA"/>
</dbReference>
<dbReference type="EMBL" id="BC011523">
    <property type="protein sequence ID" value="AAH11523.1"/>
    <property type="molecule type" value="mRNA"/>
</dbReference>
<dbReference type="CCDS" id="CCDS428.1"/>
<dbReference type="PIR" id="A55749">
    <property type="entry name" value="A55749"/>
</dbReference>
<dbReference type="RefSeq" id="NP_006793.1">
    <property type="nucleotide sequence ID" value="NM_006802.4"/>
</dbReference>
<dbReference type="PDB" id="2DT7">
    <property type="method" value="NMR"/>
    <property type="chains" value="A=71-107"/>
</dbReference>
<dbReference type="PDB" id="5Z56">
    <property type="method" value="EM"/>
    <property type="resolution" value="5.10 A"/>
    <property type="chains" value="w=1-501"/>
</dbReference>
<dbReference type="PDB" id="5Z57">
    <property type="method" value="EM"/>
    <property type="resolution" value="6.50 A"/>
    <property type="chains" value="v=317-376"/>
</dbReference>
<dbReference type="PDB" id="5Z58">
    <property type="method" value="EM"/>
    <property type="resolution" value="4.90 A"/>
    <property type="chains" value="v=317-376"/>
</dbReference>
<dbReference type="PDB" id="6AH0">
    <property type="method" value="EM"/>
    <property type="resolution" value="5.70 A"/>
    <property type="chains" value="w=1-501"/>
</dbReference>
<dbReference type="PDB" id="6AHD">
    <property type="method" value="EM"/>
    <property type="resolution" value="3.80 A"/>
    <property type="chains" value="w=1-501"/>
</dbReference>
<dbReference type="PDB" id="6FF7">
    <property type="method" value="EM"/>
    <property type="resolution" value="4.50 A"/>
    <property type="chains" value="9=1-501"/>
</dbReference>
<dbReference type="PDB" id="6QX9">
    <property type="method" value="EM"/>
    <property type="resolution" value="3.28 A"/>
    <property type="chains" value="A3=1-501"/>
</dbReference>
<dbReference type="PDB" id="6Y50">
    <property type="method" value="EM"/>
    <property type="resolution" value="4.10 A"/>
    <property type="chains" value="9=1-501"/>
</dbReference>
<dbReference type="PDB" id="6Y53">
    <property type="method" value="EM"/>
    <property type="resolution" value="7.10 A"/>
    <property type="chains" value="9=1-501"/>
</dbReference>
<dbReference type="PDB" id="6Y5Q">
    <property type="method" value="EM"/>
    <property type="resolution" value="7.10 A"/>
    <property type="chains" value="9=1-501"/>
</dbReference>
<dbReference type="PDB" id="7ABG">
    <property type="method" value="EM"/>
    <property type="resolution" value="7.80 A"/>
    <property type="chains" value="4=1-501"/>
</dbReference>
<dbReference type="PDB" id="7ABH">
    <property type="method" value="EM"/>
    <property type="resolution" value="4.50 A"/>
    <property type="chains" value="4=1-501"/>
</dbReference>
<dbReference type="PDB" id="7ABI">
    <property type="method" value="EM"/>
    <property type="resolution" value="8.00 A"/>
    <property type="chains" value="4=1-501"/>
</dbReference>
<dbReference type="PDB" id="7EVO">
    <property type="method" value="EM"/>
    <property type="resolution" value="2.50 A"/>
    <property type="chains" value="C=1-501"/>
</dbReference>
<dbReference type="PDB" id="7ONB">
    <property type="method" value="EM"/>
    <property type="resolution" value="3.10 A"/>
    <property type="chains" value="N=1-501"/>
</dbReference>
<dbReference type="PDB" id="7Q3L">
    <property type="method" value="EM"/>
    <property type="resolution" value="2.30 A"/>
    <property type="chains" value="9=1-501"/>
</dbReference>
<dbReference type="PDB" id="7Q4O">
    <property type="method" value="EM"/>
    <property type="resolution" value="2.20 A"/>
    <property type="chains" value="9=1-501"/>
</dbReference>
<dbReference type="PDB" id="7Q4P">
    <property type="method" value="EM"/>
    <property type="resolution" value="2.20 A"/>
    <property type="chains" value="9=1-501"/>
</dbReference>
<dbReference type="PDB" id="7QTT">
    <property type="method" value="EM"/>
    <property type="resolution" value="3.10 A"/>
    <property type="chains" value="J=1-501"/>
</dbReference>
<dbReference type="PDB" id="7VPX">
    <property type="method" value="EM"/>
    <property type="resolution" value="3.00 A"/>
    <property type="chains" value="C=1-501"/>
</dbReference>
<dbReference type="PDB" id="8CH6">
    <property type="method" value="EM"/>
    <property type="resolution" value="5.90 A"/>
    <property type="chains" value="J=1-501"/>
</dbReference>
<dbReference type="PDB" id="8H6E">
    <property type="method" value="EM"/>
    <property type="resolution" value="3.20 A"/>
    <property type="chains" value="2F=1-501"/>
</dbReference>
<dbReference type="PDB" id="8H6J">
    <property type="method" value="EM"/>
    <property type="resolution" value="3.25 A"/>
    <property type="chains" value="2F=1-501"/>
</dbReference>
<dbReference type="PDB" id="8H6K">
    <property type="method" value="EM"/>
    <property type="resolution" value="2.70 A"/>
    <property type="chains" value="2F=1-501"/>
</dbReference>
<dbReference type="PDB" id="8H6L">
    <property type="method" value="EM"/>
    <property type="resolution" value="2.60 A"/>
    <property type="chains" value="2F=1-501"/>
</dbReference>
<dbReference type="PDB" id="8HK1">
    <property type="method" value="EM"/>
    <property type="resolution" value="2.70 A"/>
    <property type="chains" value="C=1-501"/>
</dbReference>
<dbReference type="PDB" id="8I0P">
    <property type="method" value="EM"/>
    <property type="resolution" value="3.40 A"/>
    <property type="chains" value="w=1-501"/>
</dbReference>
<dbReference type="PDB" id="8I0R">
    <property type="method" value="EM"/>
    <property type="resolution" value="3.00 A"/>
    <property type="chains" value="w=1-501"/>
</dbReference>
<dbReference type="PDB" id="8I0S">
    <property type="method" value="EM"/>
    <property type="resolution" value="4.20 A"/>
    <property type="chains" value="w=1-501"/>
</dbReference>
<dbReference type="PDB" id="8I0T">
    <property type="method" value="EM"/>
    <property type="resolution" value="3.00 A"/>
    <property type="chains" value="w=1-501"/>
</dbReference>
<dbReference type="PDB" id="8I0U">
    <property type="method" value="EM"/>
    <property type="resolution" value="3.30 A"/>
    <property type="chains" value="w=1-501"/>
</dbReference>
<dbReference type="PDB" id="8QO9">
    <property type="method" value="EM"/>
    <property type="resolution" value="5.29 A"/>
    <property type="chains" value="9/H=1-501"/>
</dbReference>
<dbReference type="PDB" id="8QXD">
    <property type="method" value="EM"/>
    <property type="resolution" value="9.60 A"/>
    <property type="chains" value="9=1-501"/>
</dbReference>
<dbReference type="PDB" id="8QZS">
    <property type="method" value="EM"/>
    <property type="resolution" value="4.10 A"/>
    <property type="chains" value="9=1-501"/>
</dbReference>
<dbReference type="PDB" id="8R08">
    <property type="method" value="EM"/>
    <property type="resolution" value="6.10 A"/>
    <property type="chains" value="9=1-501"/>
</dbReference>
<dbReference type="PDB" id="8R09">
    <property type="method" value="EM"/>
    <property type="resolution" value="4.30 A"/>
    <property type="chains" value="9=1-501"/>
</dbReference>
<dbReference type="PDB" id="8R0A">
    <property type="method" value="EM"/>
    <property type="resolution" value="5.80 A"/>
    <property type="chains" value="9=1-501"/>
</dbReference>
<dbReference type="PDB" id="8R0B">
    <property type="method" value="EM"/>
    <property type="resolution" value="4.40 A"/>
    <property type="chains" value="9=1-501"/>
</dbReference>
<dbReference type="PDB" id="8RM5">
    <property type="method" value="EM"/>
    <property type="resolution" value="6.90 A"/>
    <property type="chains" value="9=1-501"/>
</dbReference>
<dbReference type="PDBsum" id="2DT7"/>
<dbReference type="PDBsum" id="5Z56"/>
<dbReference type="PDBsum" id="5Z57"/>
<dbReference type="PDBsum" id="5Z58"/>
<dbReference type="PDBsum" id="6AH0"/>
<dbReference type="PDBsum" id="6AHD"/>
<dbReference type="PDBsum" id="6FF7"/>
<dbReference type="PDBsum" id="6QX9"/>
<dbReference type="PDBsum" id="6Y50"/>
<dbReference type="PDBsum" id="6Y53"/>
<dbReference type="PDBsum" id="6Y5Q"/>
<dbReference type="PDBsum" id="7ABG"/>
<dbReference type="PDBsum" id="7ABH"/>
<dbReference type="PDBsum" id="7ABI"/>
<dbReference type="PDBsum" id="7EVO"/>
<dbReference type="PDBsum" id="7ONB"/>
<dbReference type="PDBsum" id="7Q3L"/>
<dbReference type="PDBsum" id="7Q4O"/>
<dbReference type="PDBsum" id="7Q4P"/>
<dbReference type="PDBsum" id="7QTT"/>
<dbReference type="PDBsum" id="7VPX"/>
<dbReference type="PDBsum" id="8CH6"/>
<dbReference type="PDBsum" id="8H6E"/>
<dbReference type="PDBsum" id="8H6J"/>
<dbReference type="PDBsum" id="8H6K"/>
<dbReference type="PDBsum" id="8H6L"/>
<dbReference type="PDBsum" id="8HK1"/>
<dbReference type="PDBsum" id="8I0P"/>
<dbReference type="PDBsum" id="8I0R"/>
<dbReference type="PDBsum" id="8I0S"/>
<dbReference type="PDBsum" id="8I0T"/>
<dbReference type="PDBsum" id="8I0U"/>
<dbReference type="PDBsum" id="8QO9"/>
<dbReference type="PDBsum" id="8QXD"/>
<dbReference type="PDBsum" id="8QZS"/>
<dbReference type="PDBsum" id="8R08"/>
<dbReference type="PDBsum" id="8R09"/>
<dbReference type="PDBsum" id="8R0A"/>
<dbReference type="PDBsum" id="8R0B"/>
<dbReference type="PDBsum" id="8RM5"/>
<dbReference type="BMRB" id="Q12874"/>
<dbReference type="EMDB" id="EMD-10688"/>
<dbReference type="EMDB" id="EMD-10689"/>
<dbReference type="EMDB" id="EMD-11695"/>
<dbReference type="EMDB" id="EMD-11696"/>
<dbReference type="EMDB" id="EMD-11697"/>
<dbReference type="EMDB" id="EMD-12994"/>
<dbReference type="EMDB" id="EMD-13793"/>
<dbReference type="EMDB" id="EMD-13811"/>
<dbReference type="EMDB" id="EMD-13812"/>
<dbReference type="EMDB" id="EMD-14146"/>
<dbReference type="EMDB" id="EMD-16658"/>
<dbReference type="EMDB" id="EMD-18529"/>
<dbReference type="EMDB" id="EMD-18718"/>
<dbReference type="EMDB" id="EMD-18781"/>
<dbReference type="EMDB" id="EMD-18786"/>
<dbReference type="EMDB" id="EMD-18787"/>
<dbReference type="EMDB" id="EMD-18788"/>
<dbReference type="EMDB" id="EMD-18789"/>
<dbReference type="EMDB" id="EMD-19349"/>
<dbReference type="EMDB" id="EMD-31334"/>
<dbReference type="EMDB" id="EMD-32074"/>
<dbReference type="EMDB" id="EMD-34500"/>
<dbReference type="EMDB" id="EMD-34505"/>
<dbReference type="EMDB" id="EMD-34507"/>
<dbReference type="EMDB" id="EMD-34508"/>
<dbReference type="EMDB" id="EMD-34841"/>
<dbReference type="EMDB" id="EMD-35105"/>
<dbReference type="EMDB" id="EMD-35107"/>
<dbReference type="EMDB" id="EMD-35108"/>
<dbReference type="EMDB" id="EMD-35109"/>
<dbReference type="EMDB" id="EMD-35110"/>
<dbReference type="EMDB" id="EMD-4665"/>
<dbReference type="EMDB" id="EMD-6889"/>
<dbReference type="EMDB" id="EMD-6890"/>
<dbReference type="EMDB" id="EMD-6891"/>
<dbReference type="EMDB" id="EMD-9621"/>
<dbReference type="EMDB" id="EMD-9624"/>
<dbReference type="SMR" id="Q12874"/>
<dbReference type="BioGRID" id="116146">
    <property type="interactions" value="321"/>
</dbReference>
<dbReference type="ComplexPortal" id="CPX-2539">
    <property type="entry name" value="U2 small nuclear ribonucleoprotein complex"/>
</dbReference>
<dbReference type="ComplexPortal" id="CPX-2565">
    <property type="entry name" value="SF3A complex"/>
</dbReference>
<dbReference type="CORUM" id="Q12874"/>
<dbReference type="DIP" id="DIP-882N"/>
<dbReference type="FunCoup" id="Q12874">
    <property type="interactions" value="4225"/>
</dbReference>
<dbReference type="IntAct" id="Q12874">
    <property type="interactions" value="113"/>
</dbReference>
<dbReference type="MINT" id="Q12874"/>
<dbReference type="STRING" id="9606.ENSP00000362110"/>
<dbReference type="ChEMBL" id="CHEMBL5465304"/>
<dbReference type="DrugBank" id="DB12695">
    <property type="generic name" value="Phenethyl Isothiocyanate"/>
</dbReference>
<dbReference type="GlyGen" id="Q12874">
    <property type="glycosylation" value="2 sites, 1 O-linked glycan (2 sites)"/>
</dbReference>
<dbReference type="iPTMnet" id="Q12874"/>
<dbReference type="MetOSite" id="Q12874"/>
<dbReference type="PhosphoSitePlus" id="Q12874"/>
<dbReference type="SwissPalm" id="Q12874"/>
<dbReference type="BioMuta" id="SF3A3"/>
<dbReference type="DMDM" id="17380310"/>
<dbReference type="jPOST" id="Q12874"/>
<dbReference type="MassIVE" id="Q12874"/>
<dbReference type="PaxDb" id="9606-ENSP00000362110"/>
<dbReference type="PeptideAtlas" id="Q12874"/>
<dbReference type="ProteomicsDB" id="58997"/>
<dbReference type="Pumba" id="Q12874"/>
<dbReference type="Antibodypedia" id="31818">
    <property type="antibodies" value="136 antibodies from 30 providers"/>
</dbReference>
<dbReference type="DNASU" id="10946"/>
<dbReference type="Ensembl" id="ENST00000373019.5">
    <property type="protein sequence ID" value="ENSP00000362110.4"/>
    <property type="gene ID" value="ENSG00000183431.12"/>
</dbReference>
<dbReference type="GeneID" id="10946"/>
<dbReference type="KEGG" id="hsa:10946"/>
<dbReference type="MANE-Select" id="ENST00000373019.5">
    <property type="protein sequence ID" value="ENSP00000362110.4"/>
    <property type="RefSeq nucleotide sequence ID" value="NM_006802.4"/>
    <property type="RefSeq protein sequence ID" value="NP_006793.1"/>
</dbReference>
<dbReference type="UCSC" id="uc001cci.4">
    <property type="organism name" value="human"/>
</dbReference>
<dbReference type="AGR" id="HGNC:10767"/>
<dbReference type="CTD" id="10946"/>
<dbReference type="DisGeNET" id="10946"/>
<dbReference type="GeneCards" id="SF3A3"/>
<dbReference type="HGNC" id="HGNC:10767">
    <property type="gene designation" value="SF3A3"/>
</dbReference>
<dbReference type="HPA" id="ENSG00000183431">
    <property type="expression patterns" value="Low tissue specificity"/>
</dbReference>
<dbReference type="MIM" id="605596">
    <property type="type" value="gene"/>
</dbReference>
<dbReference type="neXtProt" id="NX_Q12874"/>
<dbReference type="OpenTargets" id="ENSG00000183431"/>
<dbReference type="PharmGKB" id="PA35685"/>
<dbReference type="VEuPathDB" id="HostDB:ENSG00000183431"/>
<dbReference type="eggNOG" id="KOG2636">
    <property type="taxonomic scope" value="Eukaryota"/>
</dbReference>
<dbReference type="GeneTree" id="ENSGT00530000063402"/>
<dbReference type="HOGENOM" id="CLU_027160_2_0_1"/>
<dbReference type="InParanoid" id="Q12874"/>
<dbReference type="OMA" id="GPKAFQK"/>
<dbReference type="OrthoDB" id="2160351at2759"/>
<dbReference type="PAN-GO" id="Q12874">
    <property type="GO annotations" value="3 GO annotations based on evolutionary models"/>
</dbReference>
<dbReference type="PhylomeDB" id="Q12874"/>
<dbReference type="TreeFam" id="TF315227"/>
<dbReference type="PathwayCommons" id="Q12874"/>
<dbReference type="Reactome" id="R-HSA-72163">
    <property type="pathway name" value="mRNA Splicing - Major Pathway"/>
</dbReference>
<dbReference type="SignaLink" id="Q12874"/>
<dbReference type="SIGNOR" id="Q12874"/>
<dbReference type="BioGRID-ORCS" id="10946">
    <property type="hits" value="822 hits in 1125 CRISPR screens"/>
</dbReference>
<dbReference type="CD-CODE" id="804901D1">
    <property type="entry name" value="Nuclear speckle"/>
</dbReference>
<dbReference type="CD-CODE" id="91857CE7">
    <property type="entry name" value="Nucleolus"/>
</dbReference>
<dbReference type="CD-CODE" id="DEE660B4">
    <property type="entry name" value="Stress granule"/>
</dbReference>
<dbReference type="ChiTaRS" id="SF3A3">
    <property type="organism name" value="human"/>
</dbReference>
<dbReference type="EvolutionaryTrace" id="Q12874"/>
<dbReference type="GeneWiki" id="SF3A3"/>
<dbReference type="GenomeRNAi" id="10946"/>
<dbReference type="Pharos" id="Q12874">
    <property type="development level" value="Tbio"/>
</dbReference>
<dbReference type="PRO" id="PR:Q12874"/>
<dbReference type="Proteomes" id="UP000005640">
    <property type="component" value="Chromosome 1"/>
</dbReference>
<dbReference type="RNAct" id="Q12874">
    <property type="molecule type" value="protein"/>
</dbReference>
<dbReference type="Bgee" id="ENSG00000183431">
    <property type="expression patterns" value="Expressed in sural nerve and 208 other cell types or tissues"/>
</dbReference>
<dbReference type="GO" id="GO:0071013">
    <property type="term" value="C:catalytic step 2 spliceosome"/>
    <property type="evidence" value="ECO:0000314"/>
    <property type="project" value="UniProtKB"/>
</dbReference>
<dbReference type="GO" id="GO:0016607">
    <property type="term" value="C:nuclear speck"/>
    <property type="evidence" value="ECO:0000314"/>
    <property type="project" value="UniProtKB"/>
</dbReference>
<dbReference type="GO" id="GO:0005654">
    <property type="term" value="C:nucleoplasm"/>
    <property type="evidence" value="ECO:0000314"/>
    <property type="project" value="HPA"/>
</dbReference>
<dbReference type="GO" id="GO:0005634">
    <property type="term" value="C:nucleus"/>
    <property type="evidence" value="ECO:0000314"/>
    <property type="project" value="UniProtKB"/>
</dbReference>
<dbReference type="GO" id="GO:0005681">
    <property type="term" value="C:spliceosomal complex"/>
    <property type="evidence" value="ECO:0000314"/>
    <property type="project" value="HGNC-UCL"/>
</dbReference>
<dbReference type="GO" id="GO:0005686">
    <property type="term" value="C:U2 snRNP"/>
    <property type="evidence" value="ECO:0000314"/>
    <property type="project" value="UniProtKB"/>
</dbReference>
<dbReference type="GO" id="GO:0071005">
    <property type="term" value="C:U2-type precatalytic spliceosome"/>
    <property type="evidence" value="ECO:0000314"/>
    <property type="project" value="UniProtKB"/>
</dbReference>
<dbReference type="GO" id="GO:0005684">
    <property type="term" value="C:U2-type spliceosomal complex"/>
    <property type="evidence" value="ECO:0000314"/>
    <property type="project" value="UniProtKB"/>
</dbReference>
<dbReference type="GO" id="GO:0003723">
    <property type="term" value="F:RNA binding"/>
    <property type="evidence" value="ECO:0007005"/>
    <property type="project" value="UniProtKB"/>
</dbReference>
<dbReference type="GO" id="GO:0008270">
    <property type="term" value="F:zinc ion binding"/>
    <property type="evidence" value="ECO:0007669"/>
    <property type="project" value="UniProtKB-KW"/>
</dbReference>
<dbReference type="GO" id="GO:0000389">
    <property type="term" value="P:mRNA 3'-splice site recognition"/>
    <property type="evidence" value="ECO:0000304"/>
    <property type="project" value="HGNC-UCL"/>
</dbReference>
<dbReference type="GO" id="GO:0006397">
    <property type="term" value="P:mRNA processing"/>
    <property type="evidence" value="ECO:0000315"/>
    <property type="project" value="HGNC-UCL"/>
</dbReference>
<dbReference type="GO" id="GO:0000398">
    <property type="term" value="P:mRNA splicing, via spliceosome"/>
    <property type="evidence" value="ECO:0000314"/>
    <property type="project" value="UniProtKB"/>
</dbReference>
<dbReference type="GO" id="GO:0000375">
    <property type="term" value="P:RNA splicing, via transesterification reactions"/>
    <property type="evidence" value="ECO:0000304"/>
    <property type="project" value="UniProtKB"/>
</dbReference>
<dbReference type="GO" id="GO:1903241">
    <property type="term" value="P:U2-type prespliceosome assembly"/>
    <property type="evidence" value="ECO:0000314"/>
    <property type="project" value="UniProtKB"/>
</dbReference>
<dbReference type="InterPro" id="IPR000690">
    <property type="entry name" value="Matrin/U1-C_Znf_C2H2"/>
</dbReference>
<dbReference type="InterPro" id="IPR051421">
    <property type="entry name" value="RNA_Proc_DNA_Dmg_Regulator"/>
</dbReference>
<dbReference type="InterPro" id="IPR025086">
    <property type="entry name" value="SDE2/SF3A3_SAP"/>
</dbReference>
<dbReference type="InterPro" id="IPR031774">
    <property type="entry name" value="SF3A3_dom"/>
</dbReference>
<dbReference type="InterPro" id="IPR024598">
    <property type="entry name" value="SF3a60/Prp9_C"/>
</dbReference>
<dbReference type="InterPro" id="IPR021966">
    <property type="entry name" value="SF3a60_bindingd"/>
</dbReference>
<dbReference type="PANTHER" id="PTHR12786">
    <property type="entry name" value="SPLICING FACTOR SF3A-RELATED"/>
    <property type="match status" value="1"/>
</dbReference>
<dbReference type="PANTHER" id="PTHR12786:SF1">
    <property type="entry name" value="SPLICING REGULATOR SDE2"/>
    <property type="match status" value="1"/>
</dbReference>
<dbReference type="Pfam" id="PF13297">
    <property type="entry name" value="SDE2_2C"/>
    <property type="match status" value="1"/>
</dbReference>
<dbReference type="Pfam" id="PF16837">
    <property type="entry name" value="SF3A3"/>
    <property type="match status" value="1"/>
</dbReference>
<dbReference type="Pfam" id="PF12108">
    <property type="entry name" value="SF3a60_bindingd"/>
    <property type="match status" value="1"/>
</dbReference>
<dbReference type="Pfam" id="PF11931">
    <property type="entry name" value="SF3a60_Prp9_C"/>
    <property type="match status" value="1"/>
</dbReference>
<dbReference type="PROSITE" id="PS50171">
    <property type="entry name" value="ZF_MATRIN"/>
    <property type="match status" value="1"/>
</dbReference>
<sequence length="501" mass="58849">METILEQQRRYHEEKERLMDVMAKEMLTKKSTLRDQINSDHRTRAMQDRYMEVSGNLRDLYDDKDGLRKEELNAISGPNEFAEFYNRLKQIKEFHRKHPNEICVPMSVEFEELLKARENPSEEAQNLVEFTDEEGYGRYLDLHDCYLKYINLKASEKLDYITYLSIFDQLFDIPKERKNAEYKRYLEMLLEYLQDYTDRVKPLQDQNELFGKIQAEFEKKWENGTFPGWPKETSSALTHAGAHLDLSAFSSWEELASLGLDRLKSALLALGLKCGGTLEERAQRLFSTKGKSLESLDTSLFAKNPKSKGTKRDTERNKDIAFLEAQIYEYVEILGEQRHLTHENVQRKQARTGEEREEEEEEQISESESEDEENEIIYNPKNLPLGWDGKPIPYWLYKLHGLNINYNCEICGNYTYRGPKAFQRHFAEWRHAHGMRCLGIPNTAHFANVTQIEDAVSLWAKLKLQKASERWQPDTEEEYEDSSGNVVNKKTYEDLKRQGLL</sequence>
<accession>Q12874</accession>
<accession>D3DPT5</accession>
<accession>Q15460</accession>
<accession>Q5VT87</accession>
<reference key="1">
    <citation type="journal article" date="1994" name="Proc. Natl. Acad. Sci. U.S.A.">
        <title>Specific protein-protein interactions between the essential mammalian spliceosome-associated proteins SAP 61 and SAP 114.</title>
        <authorList>
            <person name="Chiara M.D."/>
            <person name="Champion-Arnaud P."/>
            <person name="Buvoli M."/>
            <person name="Nadal-Ginard B."/>
            <person name="Reed R."/>
        </authorList>
    </citation>
    <scope>NUCLEOTIDE SEQUENCE [MRNA]</scope>
    <scope>PARTIAL PROTEIN SEQUENCE</scope>
    <scope>INTERACTION WITH SF3A1</scope>
    <scope>IDENTIFICATION IN THE PRE-SPLICEOSOME</scope>
    <scope>SUBCELLULAR LOCATION</scope>
    <source>
        <tissue>Cervix adenocarcinoma</tissue>
    </source>
</reference>
<reference key="2">
    <citation type="journal article" date="1994" name="Nucleic Acids Res.">
        <title>Splicing factor SF3a60 is the mammalian homologue of PRP9 of S.cerevisiae: the conserved zinc finger-like motif is functionally exchangeable in vivo.</title>
        <authorList>
            <person name="Kraemer A."/>
            <person name="Legrain P."/>
            <person name="Mulhauser F."/>
            <person name="Groening K."/>
            <person name="Brosi R."/>
            <person name="Bilbe G."/>
        </authorList>
    </citation>
    <scope>NUCLEOTIDE SEQUENCE [MRNA]</scope>
    <scope>TISSUE SPECIFICITY</scope>
    <source>
        <tissue>Cervix adenocarcinoma</tissue>
    </source>
</reference>
<reference key="3">
    <citation type="journal article" date="2006" name="Nature">
        <title>The DNA sequence and biological annotation of human chromosome 1.</title>
        <authorList>
            <person name="Gregory S.G."/>
            <person name="Barlow K.F."/>
            <person name="McLay K.E."/>
            <person name="Kaul R."/>
            <person name="Swarbreck D."/>
            <person name="Dunham A."/>
            <person name="Scott C.E."/>
            <person name="Howe K.L."/>
            <person name="Woodfine K."/>
            <person name="Spencer C.C.A."/>
            <person name="Jones M.C."/>
            <person name="Gillson C."/>
            <person name="Searle S."/>
            <person name="Zhou Y."/>
            <person name="Kokocinski F."/>
            <person name="McDonald L."/>
            <person name="Evans R."/>
            <person name="Phillips K."/>
            <person name="Atkinson A."/>
            <person name="Cooper R."/>
            <person name="Jones C."/>
            <person name="Hall R.E."/>
            <person name="Andrews T.D."/>
            <person name="Lloyd C."/>
            <person name="Ainscough R."/>
            <person name="Almeida J.P."/>
            <person name="Ambrose K.D."/>
            <person name="Anderson F."/>
            <person name="Andrew R.W."/>
            <person name="Ashwell R.I.S."/>
            <person name="Aubin K."/>
            <person name="Babbage A.K."/>
            <person name="Bagguley C.L."/>
            <person name="Bailey J."/>
            <person name="Beasley H."/>
            <person name="Bethel G."/>
            <person name="Bird C.P."/>
            <person name="Bray-Allen S."/>
            <person name="Brown J.Y."/>
            <person name="Brown A.J."/>
            <person name="Buckley D."/>
            <person name="Burton J."/>
            <person name="Bye J."/>
            <person name="Carder C."/>
            <person name="Chapman J.C."/>
            <person name="Clark S.Y."/>
            <person name="Clarke G."/>
            <person name="Clee C."/>
            <person name="Cobley V."/>
            <person name="Collier R.E."/>
            <person name="Corby N."/>
            <person name="Coville G.J."/>
            <person name="Davies J."/>
            <person name="Deadman R."/>
            <person name="Dunn M."/>
            <person name="Earthrowl M."/>
            <person name="Ellington A.G."/>
            <person name="Errington H."/>
            <person name="Frankish A."/>
            <person name="Frankland J."/>
            <person name="French L."/>
            <person name="Garner P."/>
            <person name="Garnett J."/>
            <person name="Gay L."/>
            <person name="Ghori M.R.J."/>
            <person name="Gibson R."/>
            <person name="Gilby L.M."/>
            <person name="Gillett W."/>
            <person name="Glithero R.J."/>
            <person name="Grafham D.V."/>
            <person name="Griffiths C."/>
            <person name="Griffiths-Jones S."/>
            <person name="Grocock R."/>
            <person name="Hammond S."/>
            <person name="Harrison E.S.I."/>
            <person name="Hart E."/>
            <person name="Haugen E."/>
            <person name="Heath P.D."/>
            <person name="Holmes S."/>
            <person name="Holt K."/>
            <person name="Howden P.J."/>
            <person name="Hunt A.R."/>
            <person name="Hunt S.E."/>
            <person name="Hunter G."/>
            <person name="Isherwood J."/>
            <person name="James R."/>
            <person name="Johnson C."/>
            <person name="Johnson D."/>
            <person name="Joy A."/>
            <person name="Kay M."/>
            <person name="Kershaw J.K."/>
            <person name="Kibukawa M."/>
            <person name="Kimberley A.M."/>
            <person name="King A."/>
            <person name="Knights A.J."/>
            <person name="Lad H."/>
            <person name="Laird G."/>
            <person name="Lawlor S."/>
            <person name="Leongamornlert D.A."/>
            <person name="Lloyd D.M."/>
            <person name="Loveland J."/>
            <person name="Lovell J."/>
            <person name="Lush M.J."/>
            <person name="Lyne R."/>
            <person name="Martin S."/>
            <person name="Mashreghi-Mohammadi M."/>
            <person name="Matthews L."/>
            <person name="Matthews N.S.W."/>
            <person name="McLaren S."/>
            <person name="Milne S."/>
            <person name="Mistry S."/>
            <person name="Moore M.J.F."/>
            <person name="Nickerson T."/>
            <person name="O'Dell C.N."/>
            <person name="Oliver K."/>
            <person name="Palmeiri A."/>
            <person name="Palmer S.A."/>
            <person name="Parker A."/>
            <person name="Patel D."/>
            <person name="Pearce A.V."/>
            <person name="Peck A.I."/>
            <person name="Pelan S."/>
            <person name="Phelps K."/>
            <person name="Phillimore B.J."/>
            <person name="Plumb R."/>
            <person name="Rajan J."/>
            <person name="Raymond C."/>
            <person name="Rouse G."/>
            <person name="Saenphimmachak C."/>
            <person name="Sehra H.K."/>
            <person name="Sheridan E."/>
            <person name="Shownkeen R."/>
            <person name="Sims S."/>
            <person name="Skuce C.D."/>
            <person name="Smith M."/>
            <person name="Steward C."/>
            <person name="Subramanian S."/>
            <person name="Sycamore N."/>
            <person name="Tracey A."/>
            <person name="Tromans A."/>
            <person name="Van Helmond Z."/>
            <person name="Wall M."/>
            <person name="Wallis J.M."/>
            <person name="White S."/>
            <person name="Whitehead S.L."/>
            <person name="Wilkinson J.E."/>
            <person name="Willey D.L."/>
            <person name="Williams H."/>
            <person name="Wilming L."/>
            <person name="Wray P.W."/>
            <person name="Wu Z."/>
            <person name="Coulson A."/>
            <person name="Vaudin M."/>
            <person name="Sulston J.E."/>
            <person name="Durbin R.M."/>
            <person name="Hubbard T."/>
            <person name="Wooster R."/>
            <person name="Dunham I."/>
            <person name="Carter N.P."/>
            <person name="McVean G."/>
            <person name="Ross M.T."/>
            <person name="Harrow J."/>
            <person name="Olson M.V."/>
            <person name="Beck S."/>
            <person name="Rogers J."/>
            <person name="Bentley D.R."/>
        </authorList>
    </citation>
    <scope>NUCLEOTIDE SEQUENCE [LARGE SCALE GENOMIC DNA]</scope>
</reference>
<reference key="4">
    <citation type="submission" date="2005-09" db="EMBL/GenBank/DDBJ databases">
        <authorList>
            <person name="Mural R.J."/>
            <person name="Istrail S."/>
            <person name="Sutton G.G."/>
            <person name="Florea L."/>
            <person name="Halpern A.L."/>
            <person name="Mobarry C.M."/>
            <person name="Lippert R."/>
            <person name="Walenz B."/>
            <person name="Shatkay H."/>
            <person name="Dew I."/>
            <person name="Miller J.R."/>
            <person name="Flanigan M.J."/>
            <person name="Edwards N.J."/>
            <person name="Bolanos R."/>
            <person name="Fasulo D."/>
            <person name="Halldorsson B.V."/>
            <person name="Hannenhalli S."/>
            <person name="Turner R."/>
            <person name="Yooseph S."/>
            <person name="Lu F."/>
            <person name="Nusskern D.R."/>
            <person name="Shue B.C."/>
            <person name="Zheng X.H."/>
            <person name="Zhong F."/>
            <person name="Delcher A.L."/>
            <person name="Huson D.H."/>
            <person name="Kravitz S.A."/>
            <person name="Mouchard L."/>
            <person name="Reinert K."/>
            <person name="Remington K.A."/>
            <person name="Clark A.G."/>
            <person name="Waterman M.S."/>
            <person name="Eichler E.E."/>
            <person name="Adams M.D."/>
            <person name="Hunkapiller M.W."/>
            <person name="Myers E.W."/>
            <person name="Venter J.C."/>
        </authorList>
    </citation>
    <scope>NUCLEOTIDE SEQUENCE [LARGE SCALE GENOMIC DNA]</scope>
</reference>
<reference key="5">
    <citation type="journal article" date="2004" name="Genome Res.">
        <title>The status, quality, and expansion of the NIH full-length cDNA project: the Mammalian Gene Collection (MGC).</title>
        <authorList>
            <consortium name="The MGC Project Team"/>
        </authorList>
    </citation>
    <scope>NUCLEOTIDE SEQUENCE [LARGE SCALE MRNA]</scope>
    <source>
        <tissue>Eye</tissue>
        <tissue>Lung</tissue>
    </source>
</reference>
<reference key="6">
    <citation type="submission" date="2004-10" db="UniProtKB">
        <authorList>
            <person name="Bienvenut W.V."/>
        </authorList>
    </citation>
    <scope>PROTEIN SEQUENCE OF 1-9; 265-273 AND 292-303</scope>
    <scope>ACETYLATION AT MET-1</scope>
    <scope>IDENTIFICATION BY MASS SPECTROMETRY</scope>
    <source>
        <tissue>B-cell lymphoma</tissue>
    </source>
</reference>
<reference key="7">
    <citation type="journal article" date="2000" name="Mol. Cell">
        <title>Functional association of U2 snRNP with the ATP-independent spliceosomal complex E.</title>
        <authorList>
            <person name="Das R."/>
            <person name="Zhou Z."/>
            <person name="Reed R."/>
        </authorList>
    </citation>
    <scope>FUNCTION</scope>
    <scope>SUBCELLULAR LOCATION</scope>
    <scope>SUBUNIT</scope>
</reference>
<reference key="8">
    <citation type="journal article" date="2001" name="Mol. Cell. Biol.">
        <title>Domains in human splicing factors SF3a60 and SF3a66 required for binding to SF3a120, assembly of the 17S U2 snRNP, and prespliceosome formation.</title>
        <authorList>
            <person name="Nesic D."/>
            <person name="Kraemer A."/>
        </authorList>
    </citation>
    <scope>FUNCTION</scope>
    <scope>SUBUNIT</scope>
</reference>
<reference key="9">
    <citation type="journal article" date="2002" name="RNA">
        <title>Purification and characterization of native spliceosomes suitable for three-dimensional structural analysis.</title>
        <authorList>
            <person name="Jurica M.S."/>
            <person name="Licklider L.J."/>
            <person name="Gygi S.P."/>
            <person name="Grigorieff N."/>
            <person name="Moore M.J."/>
        </authorList>
    </citation>
    <scope>IDENTIFICATION BY MASS SPECTROMETRY</scope>
    <scope>IDENTIFICATION IN THE SPLICEOSOMAL C COMPLEX</scope>
</reference>
<reference key="10">
    <citation type="journal article" date="2005" name="Nat. Biotechnol.">
        <title>Immunoaffinity profiling of tyrosine phosphorylation in cancer cells.</title>
        <authorList>
            <person name="Rush J."/>
            <person name="Moritz A."/>
            <person name="Lee K.A."/>
            <person name="Guo A."/>
            <person name="Goss V.L."/>
            <person name="Spek E.J."/>
            <person name="Zhang H."/>
            <person name="Zha X.-M."/>
            <person name="Polakiewicz R.D."/>
            <person name="Comb M.J."/>
        </authorList>
    </citation>
    <scope>IDENTIFICATION BY MASS SPECTROMETRY [LARGE SCALE ANALYSIS]</scope>
</reference>
<reference key="11">
    <citation type="journal article" date="2008" name="Proc. Natl. Acad. Sci. U.S.A.">
        <title>A quantitative atlas of mitotic phosphorylation.</title>
        <authorList>
            <person name="Dephoure N."/>
            <person name="Zhou C."/>
            <person name="Villen J."/>
            <person name="Beausoleil S.A."/>
            <person name="Bakalarski C.E."/>
            <person name="Elledge S.J."/>
            <person name="Gygi S.P."/>
        </authorList>
    </citation>
    <scope>PHOSPHORYLATION [LARGE SCALE ANALYSIS] AT SER-365; SER-367 AND SER-369</scope>
    <scope>IDENTIFICATION BY MASS SPECTROMETRY [LARGE SCALE ANALYSIS]</scope>
    <source>
        <tissue>Cervix carcinoma</tissue>
    </source>
</reference>
<reference key="12">
    <citation type="journal article" date="2009" name="Anal. Chem.">
        <title>Lys-N and trypsin cover complementary parts of the phosphoproteome in a refined SCX-based approach.</title>
        <authorList>
            <person name="Gauci S."/>
            <person name="Helbig A.O."/>
            <person name="Slijper M."/>
            <person name="Krijgsveld J."/>
            <person name="Heck A.J."/>
            <person name="Mohammed S."/>
        </authorList>
    </citation>
    <scope>ACETYLATION [LARGE SCALE ANALYSIS] AT MET-1</scope>
    <scope>IDENTIFICATION BY MASS SPECTROMETRY [LARGE SCALE ANALYSIS]</scope>
</reference>
<reference key="13">
    <citation type="journal article" date="2009" name="J. Proteome Res.">
        <title>Glycoproteomics analysis of human liver tissue by combination of multiple enzyme digestion and hydrazide chemistry.</title>
        <authorList>
            <person name="Chen R."/>
            <person name="Jiang X."/>
            <person name="Sun D."/>
            <person name="Han G."/>
            <person name="Wang F."/>
            <person name="Ye M."/>
            <person name="Wang L."/>
            <person name="Zou H."/>
        </authorList>
    </citation>
    <scope>IDENTIFICATION BY MASS SPECTROMETRY</scope>
    <source>
        <tissue>Liver</tissue>
    </source>
</reference>
<reference key="14">
    <citation type="journal article" date="2009" name="Sci. Signal.">
        <title>Quantitative phosphoproteomic analysis of T cell receptor signaling reveals system-wide modulation of protein-protein interactions.</title>
        <authorList>
            <person name="Mayya V."/>
            <person name="Lundgren D.H."/>
            <person name="Hwang S.-I."/>
            <person name="Rezaul K."/>
            <person name="Wu L."/>
            <person name="Eng J.K."/>
            <person name="Rodionov V."/>
            <person name="Han D.K."/>
        </authorList>
    </citation>
    <scope>PHOSPHORYLATION [LARGE SCALE ANALYSIS] AT SER-299; SER-365; SER-367 AND SER-369</scope>
    <scope>IDENTIFICATION BY MASS SPECTROMETRY [LARGE SCALE ANALYSIS]</scope>
    <source>
        <tissue>Leukemic T-cell</tissue>
    </source>
</reference>
<reference key="15">
    <citation type="journal article" date="2009" name="Science">
        <title>Lysine acetylation targets protein complexes and co-regulates major cellular functions.</title>
        <authorList>
            <person name="Choudhary C."/>
            <person name="Kumar C."/>
            <person name="Gnad F."/>
            <person name="Nielsen M.L."/>
            <person name="Rehman M."/>
            <person name="Walther T.C."/>
            <person name="Olsen J.V."/>
            <person name="Mann M."/>
        </authorList>
    </citation>
    <scope>IDENTIFICATION BY MASS SPECTROMETRY [LARGE SCALE ANALYSIS]</scope>
</reference>
<reference key="16">
    <citation type="journal article" date="2011" name="BMC Syst. Biol.">
        <title>Initial characterization of the human central proteome.</title>
        <authorList>
            <person name="Burkard T.R."/>
            <person name="Planyavsky M."/>
            <person name="Kaupe I."/>
            <person name="Breitwieser F.P."/>
            <person name="Buerckstuemmer T."/>
            <person name="Bennett K.L."/>
            <person name="Superti-Furga G."/>
            <person name="Colinge J."/>
        </authorList>
    </citation>
    <scope>IDENTIFICATION BY MASS SPECTROMETRY [LARGE SCALE ANALYSIS]</scope>
</reference>
<reference key="17">
    <citation type="journal article" date="2011" name="J. Biol. Chem.">
        <title>Interaction domains and nuclear targeting signals in subunits of the U2 small nuclear ribonucleoprotein particle-associated splicing factor SF3a.</title>
        <authorList>
            <person name="Huang C.J."/>
            <person name="Ferfoglia F."/>
            <person name="Raleff F."/>
            <person name="Kraemer A."/>
        </authorList>
    </citation>
    <scope>SUBUNIT</scope>
    <scope>SUBCELLULAR LOCATION</scope>
    <scope>MUTAGENESIS OF 174-PRO--ALA-180</scope>
</reference>
<reference key="18">
    <citation type="journal article" date="2011" name="Sci. Signal.">
        <title>System-wide temporal characterization of the proteome and phosphoproteome of human embryonic stem cell differentiation.</title>
        <authorList>
            <person name="Rigbolt K.T."/>
            <person name="Prokhorova T.A."/>
            <person name="Akimov V."/>
            <person name="Henningsen J."/>
            <person name="Johansen P.T."/>
            <person name="Kratchmarova I."/>
            <person name="Kassem M."/>
            <person name="Mann M."/>
            <person name="Olsen J.V."/>
            <person name="Blagoev B."/>
        </authorList>
    </citation>
    <scope>PHOSPHORYLATION [LARGE SCALE ANALYSIS] AT SER-365; SER-367 AND SER-369</scope>
    <scope>IDENTIFICATION BY MASS SPECTROMETRY [LARGE SCALE ANALYSIS]</scope>
</reference>
<reference key="19">
    <citation type="journal article" date="2012" name="Mol. Cell. Proteomics">
        <title>Comparative large-scale characterisation of plant vs. mammal proteins reveals similar and idiosyncratic N-alpha acetylation features.</title>
        <authorList>
            <person name="Bienvenut W.V."/>
            <person name="Sumpton D."/>
            <person name="Martinez A."/>
            <person name="Lilla S."/>
            <person name="Espagne C."/>
            <person name="Meinnel T."/>
            <person name="Giglione C."/>
        </authorList>
    </citation>
    <scope>ACETYLATION [LARGE SCALE ANALYSIS] AT MET-1</scope>
    <scope>IDENTIFICATION BY MASS SPECTROMETRY [LARGE SCALE ANALYSIS]</scope>
</reference>
<reference key="20">
    <citation type="journal article" date="2012" name="Proc. Natl. Acad. Sci. U.S.A.">
        <title>N-terminal acetylome analyses and functional insights of the N-terminal acetyltransferase NatB.</title>
        <authorList>
            <person name="Van Damme P."/>
            <person name="Lasa M."/>
            <person name="Polevoda B."/>
            <person name="Gazquez C."/>
            <person name="Elosegui-Artola A."/>
            <person name="Kim D.S."/>
            <person name="De Juan-Pardo E."/>
            <person name="Demeyer K."/>
            <person name="Hole K."/>
            <person name="Larrea E."/>
            <person name="Timmerman E."/>
            <person name="Prieto J."/>
            <person name="Arnesen T."/>
            <person name="Sherman F."/>
            <person name="Gevaert K."/>
            <person name="Aldabe R."/>
        </authorList>
    </citation>
    <scope>ACETYLATION [LARGE SCALE ANALYSIS] AT MET-1</scope>
    <scope>IDENTIFICATION BY MASS SPECTROMETRY [LARGE SCALE ANALYSIS]</scope>
</reference>
<reference key="21">
    <citation type="journal article" date="2013" name="J. Proteome Res.">
        <title>Toward a comprehensive characterization of a human cancer cell phosphoproteome.</title>
        <authorList>
            <person name="Zhou H."/>
            <person name="Di Palma S."/>
            <person name="Preisinger C."/>
            <person name="Peng M."/>
            <person name="Polat A.N."/>
            <person name="Heck A.J."/>
            <person name="Mohammed S."/>
        </authorList>
    </citation>
    <scope>PHOSPHORYLATION [LARGE SCALE ANALYSIS] AT SER-54; SER-121; SER-295; SER-299 AND THR-475</scope>
    <scope>IDENTIFICATION BY MASS SPECTROMETRY [LARGE SCALE ANALYSIS]</scope>
    <source>
        <tissue>Cervix carcinoma</tissue>
        <tissue>Erythroleukemia</tissue>
    </source>
</reference>
<reference key="22">
    <citation type="journal article" date="2014" name="J. Proteomics">
        <title>An enzyme assisted RP-RPLC approach for in-depth analysis of human liver phosphoproteome.</title>
        <authorList>
            <person name="Bian Y."/>
            <person name="Song C."/>
            <person name="Cheng K."/>
            <person name="Dong M."/>
            <person name="Wang F."/>
            <person name="Huang J."/>
            <person name="Sun D."/>
            <person name="Wang L."/>
            <person name="Ye M."/>
            <person name="Zou H."/>
        </authorList>
    </citation>
    <scope>IDENTIFICATION BY MASS SPECTROMETRY [LARGE SCALE ANALYSIS]</scope>
    <source>
        <tissue>Liver</tissue>
    </source>
</reference>
<reference key="23">
    <citation type="journal article" date="2006" name="Structure">
        <title>Solution structures of the SURP domains and the subunit-assembly mechanism within the splicing factor SF3a complex in 17S U2 snRNP.</title>
        <authorList>
            <person name="Kuwasako K."/>
            <person name="He F."/>
            <person name="Inoue M."/>
            <person name="Tanaka A."/>
            <person name="Sugano S."/>
            <person name="Guntert P."/>
            <person name="Muto Y."/>
            <person name="Yokoyama S."/>
        </authorList>
    </citation>
    <scope>STRUCTURE BY NMR OF 71-107 IN COMPLEX WITH SF3A1</scope>
    <scope>SUBUNIT</scope>
</reference>
<reference evidence="20 21 22" key="24">
    <citation type="journal article" date="2018" name="Cell Res.">
        <title>Structure of the human activated spliceosome in three conformational states.</title>
        <authorList>
            <person name="Zhang X."/>
            <person name="Yan C."/>
            <person name="Zhan X."/>
            <person name="Li L."/>
            <person name="Lei J."/>
            <person name="Shi Y."/>
        </authorList>
    </citation>
    <scope>STRUCTURE BY ELECTRON MICROSCOPY (4.90 ANGSTROMS)</scope>
    <scope>FUNCTION</scope>
    <scope>SUBUNIT</scope>
    <scope>SUBCELLULAR LOCATION</scope>
</reference>
<reference key="25">
    <citation type="journal article" date="2018" name="Cell Res.">
        <title>Structures of the human pre-catalytic spliceosome and its precursor spliceosome.</title>
        <authorList>
            <person name="Zhan X."/>
            <person name="Yan C."/>
            <person name="Zhang X."/>
            <person name="Lei J."/>
            <person name="Shi Y."/>
        </authorList>
    </citation>
    <scope>STRUCTURE BY ELECTRON MICROSCOPY (3.80 ANGSTROMS)</scope>
    <scope>FUNCTION</scope>
    <scope>SUBUNIT</scope>
    <scope>SUBCELLULAR LOCATION</scope>
</reference>
<reference evidence="23" key="26">
    <citation type="journal article" date="2020" name="Nature">
        <title>Molecular architecture of the human 17S U2 snRNP.</title>
        <authorList>
            <person name="Zhang Z."/>
            <person name="Will C.L."/>
            <person name="Bertram K."/>
            <person name="Dybkov O."/>
            <person name="Hartmuth K."/>
            <person name="Agafonov D.E."/>
            <person name="Hofele R."/>
            <person name="Urlaub H."/>
            <person name="Kastner B."/>
            <person name="Luehrmann R."/>
            <person name="Stark H."/>
        </authorList>
    </citation>
    <scope>STRUCTURE BY ELECTRON MICROSCOPY (4.10 ANGSTROMS) IN COMPLEX WITH THE 17S U2 SNRNP COMPLEX</scope>
    <scope>FUNCTION</scope>
    <scope>IDENTIFICATION IN THE 17S U2 SNRNP COMPLEX</scope>
</reference>
<reference evidence="24 25" key="27">
    <citation type="journal article" date="2022" name="Science">
        <title>Structural basis of branch site recognition by the human spliceosome.</title>
        <authorList>
            <person name="Tholen J."/>
            <person name="Razew M."/>
            <person name="Weis F."/>
            <person name="Galej W.P."/>
        </authorList>
    </citation>
    <scope>STRUCTURE BY ELECTRON MICROSCOPY (2.30 ANGSTROMS) IN COMPLEX WITH THE 17S U2 SNRNP COMPLEX</scope>
    <scope>FUNCTION</scope>
    <scope>IDENTIFICATION IN THE 17S U2 SNRNP COMPLEX</scope>
</reference>
<reference evidence="26" key="28">
    <citation type="journal article" date="2023" name="Nat. Commun.">
        <title>Mechanisms of the RNA helicases DDX42 and DDX46 in human U2 snRNP assembly.</title>
        <authorList>
            <person name="Yang F."/>
            <person name="Bian T."/>
            <person name="Zhan X."/>
            <person name="Chen Z."/>
            <person name="Xing Z."/>
            <person name="Larsen N.A."/>
            <person name="Zhang X."/>
            <person name="Shi Y."/>
        </authorList>
    </citation>
    <scope>STRUCTURE BY ELECTRON MICROSCOPY (2.70 ANGSTROMS) IN COMPLEX WITH THE 17S U2 SNRNP COMPLEX</scope>
    <scope>IDENTIFICATION IN THE 17S U2 SNRNP COMPLEX</scope>
</reference>
<keyword id="KW-0002">3D-structure</keyword>
<keyword id="KW-0007">Acetylation</keyword>
<keyword id="KW-0903">Direct protein sequencing</keyword>
<keyword id="KW-0479">Metal-binding</keyword>
<keyword id="KW-0507">mRNA processing</keyword>
<keyword id="KW-0508">mRNA splicing</keyword>
<keyword id="KW-0539">Nucleus</keyword>
<keyword id="KW-0597">Phosphoprotein</keyword>
<keyword id="KW-1267">Proteomics identification</keyword>
<keyword id="KW-1185">Reference proteome</keyword>
<keyword id="KW-0747">Spliceosome</keyword>
<keyword id="KW-0862">Zinc</keyword>
<keyword id="KW-0863">Zinc-finger</keyword>
<protein>
    <recommendedName>
        <fullName>Splicing factor 3A subunit 3</fullName>
    </recommendedName>
    <alternativeName>
        <fullName evidence="16 17">SF3a60</fullName>
    </alternativeName>
    <alternativeName>
        <fullName>Spliceosome-associated protein 61</fullName>
        <shortName evidence="18">SAP 61</shortName>
    </alternativeName>
</protein>
<name>SF3A3_HUMAN</name>
<evidence type="ECO:0000255" key="1">
    <source>
        <dbReference type="PROSITE-ProRule" id="PRU00130"/>
    </source>
</evidence>
<evidence type="ECO:0000256" key="2">
    <source>
        <dbReference type="SAM" id="MobiDB-lite"/>
    </source>
</evidence>
<evidence type="ECO:0000269" key="3">
    <source>
    </source>
</evidence>
<evidence type="ECO:0000269" key="4">
    <source>
    </source>
</evidence>
<evidence type="ECO:0000269" key="5">
    <source>
    </source>
</evidence>
<evidence type="ECO:0000269" key="6">
    <source>
    </source>
</evidence>
<evidence type="ECO:0000269" key="7">
    <source>
    </source>
</evidence>
<evidence type="ECO:0000269" key="8">
    <source>
    </source>
</evidence>
<evidence type="ECO:0000269" key="9">
    <source>
    </source>
</evidence>
<evidence type="ECO:0000269" key="10">
    <source>
    </source>
</evidence>
<evidence type="ECO:0000269" key="11">
    <source>
    </source>
</evidence>
<evidence type="ECO:0000269" key="12">
    <source>
    </source>
</evidence>
<evidence type="ECO:0000269" key="13">
    <source>
    </source>
</evidence>
<evidence type="ECO:0000269" key="14">
    <source>
    </source>
</evidence>
<evidence type="ECO:0000269" key="15">
    <source ref="6"/>
</evidence>
<evidence type="ECO:0000303" key="16">
    <source>
    </source>
</evidence>
<evidence type="ECO:0000303" key="17">
    <source>
    </source>
</evidence>
<evidence type="ECO:0000303" key="18">
    <source>
    </source>
</evidence>
<evidence type="ECO:0000305" key="19"/>
<evidence type="ECO:0007744" key="20">
    <source>
        <dbReference type="PDB" id="5Z56"/>
    </source>
</evidence>
<evidence type="ECO:0007744" key="21">
    <source>
        <dbReference type="PDB" id="5Z57"/>
    </source>
</evidence>
<evidence type="ECO:0007744" key="22">
    <source>
        <dbReference type="PDB" id="5Z58"/>
    </source>
</evidence>
<evidence type="ECO:0007744" key="23">
    <source>
        <dbReference type="PDB" id="6Y5Q"/>
    </source>
</evidence>
<evidence type="ECO:0007744" key="24">
    <source>
        <dbReference type="PDB" id="7Q4O"/>
    </source>
</evidence>
<evidence type="ECO:0007744" key="25">
    <source>
        <dbReference type="PDB" id="7Q4P"/>
    </source>
</evidence>
<evidence type="ECO:0007744" key="26">
    <source>
        <dbReference type="PDB" id="8HK1"/>
    </source>
</evidence>
<evidence type="ECO:0007744" key="27">
    <source>
    </source>
</evidence>
<evidence type="ECO:0007744" key="28">
    <source>
    </source>
</evidence>
<evidence type="ECO:0007744" key="29">
    <source>
    </source>
</evidence>
<evidence type="ECO:0007744" key="30">
    <source>
    </source>
</evidence>
<evidence type="ECO:0007744" key="31">
    <source>
    </source>
</evidence>
<evidence type="ECO:0007744" key="32">
    <source>
    </source>
</evidence>
<evidence type="ECO:0007744" key="33">
    <source>
    </source>
</evidence>
<evidence type="ECO:0007829" key="34">
    <source>
        <dbReference type="PDB" id="7EVO"/>
    </source>
</evidence>
<evidence type="ECO:0007829" key="35">
    <source>
        <dbReference type="PDB" id="7Q4O"/>
    </source>
</evidence>
<evidence type="ECO:0007829" key="36">
    <source>
        <dbReference type="PDB" id="7Q4P"/>
    </source>
</evidence>
<feature type="chain" id="PRO_0000174318" description="Splicing factor 3A subunit 3">
    <location>
        <begin position="1"/>
        <end position="501"/>
    </location>
</feature>
<feature type="zinc finger region" description="Matrin-type" evidence="1">
    <location>
        <begin position="406"/>
        <end position="437"/>
    </location>
</feature>
<feature type="region of interest" description="Disordered" evidence="2">
    <location>
        <begin position="343"/>
        <end position="374"/>
    </location>
</feature>
<feature type="short sequence motif" description="Nuclear localization signal" evidence="7">
    <location>
        <begin position="175"/>
        <end position="179"/>
    </location>
</feature>
<feature type="compositionally biased region" description="Basic and acidic residues" evidence="2">
    <location>
        <begin position="343"/>
        <end position="354"/>
    </location>
</feature>
<feature type="compositionally biased region" description="Acidic residues" evidence="2">
    <location>
        <begin position="355"/>
        <end position="374"/>
    </location>
</feature>
<feature type="modified residue" description="N-acetylmethionine" evidence="15 28 31 32">
    <location>
        <position position="1"/>
    </location>
</feature>
<feature type="modified residue" description="Phosphoserine" evidence="33">
    <location>
        <position position="54"/>
    </location>
</feature>
<feature type="modified residue" description="Phosphoserine" evidence="33">
    <location>
        <position position="121"/>
    </location>
</feature>
<feature type="modified residue" description="Phosphoserine" evidence="33">
    <location>
        <position position="295"/>
    </location>
</feature>
<feature type="modified residue" description="Phosphoserine" evidence="29 33">
    <location>
        <position position="299"/>
    </location>
</feature>
<feature type="modified residue" description="Phosphoserine" evidence="27 29 30">
    <location>
        <position position="365"/>
    </location>
</feature>
<feature type="modified residue" description="Phosphoserine" evidence="27 29 30">
    <location>
        <position position="367"/>
    </location>
</feature>
<feature type="modified residue" description="Phosphoserine" evidence="27 29 30">
    <location>
        <position position="369"/>
    </location>
</feature>
<feature type="modified residue" description="Phosphothreonine" evidence="33">
    <location>
        <position position="475"/>
    </location>
</feature>
<feature type="mutagenesis site" description="Loss of nuclear location." evidence="7">
    <location>
        <begin position="174"/>
        <end position="180"/>
    </location>
</feature>
<feature type="sequence conflict" description="In Ref. 2; CAA57388." evidence="19" ref="2">
    <original>E</original>
    <variation>G</variation>
    <location>
        <position position="176"/>
    </location>
</feature>
<feature type="turn" evidence="34">
    <location>
        <begin position="3"/>
        <end position="5"/>
    </location>
</feature>
<feature type="helix" evidence="34">
    <location>
        <begin position="6"/>
        <end position="27"/>
    </location>
</feature>
<feature type="helix" evidence="34">
    <location>
        <begin position="33"/>
        <end position="58"/>
    </location>
</feature>
<feature type="turn" evidence="34">
    <location>
        <begin position="59"/>
        <end position="63"/>
    </location>
</feature>
<feature type="helix" evidence="34">
    <location>
        <begin position="64"/>
        <end position="71"/>
    </location>
</feature>
<feature type="strand" evidence="34">
    <location>
        <begin position="74"/>
        <end position="76"/>
    </location>
</feature>
<feature type="helix" evidence="34">
    <location>
        <begin position="78"/>
        <end position="87"/>
    </location>
</feature>
<feature type="turn" evidence="34">
    <location>
        <begin position="100"/>
        <end position="102"/>
    </location>
</feature>
<feature type="helix" evidence="34">
    <location>
        <begin position="103"/>
        <end position="108"/>
    </location>
</feature>
<feature type="helix" evidence="34">
    <location>
        <begin position="126"/>
        <end position="128"/>
    </location>
</feature>
<feature type="turn" evidence="34">
    <location>
        <begin position="132"/>
        <end position="138"/>
    </location>
</feature>
<feature type="helix" evidence="34">
    <location>
        <begin position="143"/>
        <end position="153"/>
    </location>
</feature>
<feature type="helix" evidence="34">
    <location>
        <begin position="160"/>
        <end position="167"/>
    </location>
</feature>
<feature type="strand" evidence="34">
    <location>
        <begin position="170"/>
        <end position="172"/>
    </location>
</feature>
<feature type="helix" evidence="34">
    <location>
        <begin position="182"/>
        <end position="200"/>
    </location>
</feature>
<feature type="helix" evidence="34">
    <location>
        <begin position="206"/>
        <end position="219"/>
    </location>
</feature>
<feature type="helix" evidence="34">
    <location>
        <begin position="221"/>
        <end position="223"/>
    </location>
</feature>
<feature type="strand" evidence="34">
    <location>
        <begin position="225"/>
        <end position="227"/>
    </location>
</feature>
<feature type="strand" evidence="34">
    <location>
        <begin position="281"/>
        <end position="283"/>
    </location>
</feature>
<feature type="turn" evidence="34">
    <location>
        <begin position="285"/>
        <end position="287"/>
    </location>
</feature>
<feature type="strand" evidence="34">
    <location>
        <begin position="290"/>
        <end position="293"/>
    </location>
</feature>
<feature type="helix" evidence="34">
    <location>
        <begin position="294"/>
        <end position="301"/>
    </location>
</feature>
<feature type="helix" evidence="34">
    <location>
        <begin position="304"/>
        <end position="307"/>
    </location>
</feature>
<feature type="strand" evidence="34">
    <location>
        <begin position="309"/>
        <end position="313"/>
    </location>
</feature>
<feature type="turn" evidence="34">
    <location>
        <begin position="314"/>
        <end position="316"/>
    </location>
</feature>
<feature type="helix" evidence="34">
    <location>
        <begin position="318"/>
        <end position="333"/>
    </location>
</feature>
<feature type="helix" evidence="34">
    <location>
        <begin position="335"/>
        <end position="350"/>
    </location>
</feature>
<feature type="helix" evidence="34">
    <location>
        <begin position="353"/>
        <end position="361"/>
    </location>
</feature>
<feature type="helix" evidence="35">
    <location>
        <begin position="396"/>
        <end position="399"/>
    </location>
</feature>
<feature type="turn" evidence="35">
    <location>
        <begin position="400"/>
        <end position="403"/>
    </location>
</feature>
<feature type="strand" evidence="36">
    <location>
        <begin position="404"/>
        <end position="408"/>
    </location>
</feature>
<feature type="turn" evidence="35">
    <location>
        <begin position="409"/>
        <end position="412"/>
    </location>
</feature>
<feature type="strand" evidence="35">
    <location>
        <begin position="413"/>
        <end position="415"/>
    </location>
</feature>
<feature type="helix" evidence="35">
    <location>
        <begin position="419"/>
        <end position="425"/>
    </location>
</feature>
<feature type="helix" evidence="35">
    <location>
        <begin position="429"/>
        <end position="438"/>
    </location>
</feature>
<feature type="helix" evidence="35">
    <location>
        <begin position="444"/>
        <end position="446"/>
    </location>
</feature>
<feature type="helix" evidence="35">
    <location>
        <begin position="452"/>
        <end position="469"/>
    </location>
</feature>
<feature type="helix" evidence="35">
    <location>
        <begin position="473"/>
        <end position="476"/>
    </location>
</feature>
<feature type="strand" evidence="36">
    <location>
        <begin position="482"/>
        <end position="484"/>
    </location>
</feature>
<feature type="strand" evidence="34">
    <location>
        <begin position="485"/>
        <end position="487"/>
    </location>
</feature>
<feature type="turn" evidence="35">
    <location>
        <begin position="489"/>
        <end position="491"/>
    </location>
</feature>
<feature type="helix" evidence="34">
    <location>
        <begin position="495"/>
        <end position="500"/>
    </location>
</feature>
<organism>
    <name type="scientific">Homo sapiens</name>
    <name type="common">Human</name>
    <dbReference type="NCBI Taxonomy" id="9606"/>
    <lineage>
        <taxon>Eukaryota</taxon>
        <taxon>Metazoa</taxon>
        <taxon>Chordata</taxon>
        <taxon>Craniata</taxon>
        <taxon>Vertebrata</taxon>
        <taxon>Euteleostomi</taxon>
        <taxon>Mammalia</taxon>
        <taxon>Eutheria</taxon>
        <taxon>Euarchontoglires</taxon>
        <taxon>Primates</taxon>
        <taxon>Haplorrhini</taxon>
        <taxon>Catarrhini</taxon>
        <taxon>Hominidae</taxon>
        <taxon>Homo</taxon>
    </lineage>
</organism>
<proteinExistence type="evidence at protein level"/>
<comment type="function">
    <text evidence="3 4 8 9 10 11 14">Component of the 17S U2 SnRNP complex of the spliceosome, a large ribonucleoprotein complex that removes introns from transcribed pre-mRNAs (PubMed:10882114, PubMed:11533230, PubMed:32494006, PubMed:34822310, PubMed:8022796). The 17S U2 SnRNP complex (1) directly participates in early spliceosome assembly and (2) mediates recognition of the intron branch site during pre-mRNA splicing by promoting the selection of the pre-mRNA branch-site adenosine, the nucleophile for the first step of splicing (PubMed:10882114, PubMed:11533230, PubMed:32494006, PubMed:34822310). Within the 17S U2 SnRNP complex, SF3A3 is part of the SF3A subcomplex that contributes to the assembly of the 17S U2 snRNP, and the subsequent assembly of the pre-spliceosome 'E' complex and the pre-catalytic spliceosome 'A' complex (PubMed:10882114, PubMed:11533230). Involved in pre-mRNA splicing as a component of pre-catalytic spliceosome 'B' complexes (PubMed:29360106, PubMed:30315277).</text>
</comment>
<comment type="subunit">
    <text evidence="3 4 5 6 7 8 9 10 11 12 14">Component of the 17S U2 SnRNP complex, a ribonucleoprotein complex that contains small nuclear RNA (snRNA) U2 and a number of specific proteins (PubMed:21349847, PubMed:32494006, PubMed:34822310, PubMed:36797247). Part of the SF3A subcomplex of the 17S U2 SnRNP complex which is composed of three subunits; SF3A3/SAP61, SF3A2/SAP62 and SF3A1/SAP114 (PubMed:10882114, PubMed:11533230, PubMed:17098193, PubMed:21349847, PubMed:8022796). SF3A associates with the splicing factor SF3B and a 12S RNA unit to form the mature 17S U2 small nuclear ribonucleoprotein complex (17S U2 snRNP) (PubMed:10882114, PubMed:11533230). Identified in the spliceosome 'E' complex, a precursor of the spliceosome 'A' complex (PubMed:10882114). Identified in the spliceosome 'A' and 'B' complexes (PubMed:10882114, PubMed:29360106, PubMed:30315277, PubMed:8022796). Identified in the spliceosome 'C' complex (PubMed:11991638).</text>
</comment>
<comment type="interaction">
    <interactant intactId="EBI-1051880">
        <id>Q12874</id>
    </interactant>
    <interactant intactId="EBI-930964">
        <id>P54253</id>
        <label>ATXN1</label>
    </interactant>
    <organismsDiffer>false</organismsDiffer>
    <experiments>6</experiments>
</comment>
<comment type="interaction">
    <interactant intactId="EBI-1051880">
        <id>Q12874</id>
    </interactant>
    <interactant intactId="EBI-352682">
        <id>P04792</id>
        <label>HSPB1</label>
    </interactant>
    <organismsDiffer>false</organismsDiffer>
    <experiments>2</experiments>
</comment>
<comment type="interaction">
    <interactant intactId="EBI-1051880">
        <id>Q12874</id>
    </interactant>
    <interactant intactId="EBI-466029">
        <id>P42858</id>
        <label>HTT</label>
    </interactant>
    <organismsDiffer>false</organismsDiffer>
    <experiments>3</experiments>
</comment>
<comment type="interaction">
    <interactant intactId="EBI-1051880">
        <id>Q12874</id>
    </interactant>
    <interactant intactId="EBI-1055254">
        <id>Q8WXH2</id>
        <label>JPH3</label>
    </interactant>
    <organismsDiffer>false</organismsDiffer>
    <experiments>3</experiments>
</comment>
<comment type="interaction">
    <interactant intactId="EBI-1051880">
        <id>Q12874</id>
    </interactant>
    <interactant intactId="EBI-1054743">
        <id>Q15459</id>
        <label>SF3A1</label>
    </interactant>
    <organismsDiffer>false</organismsDiffer>
    <experiments>10</experiments>
</comment>
<comment type="interaction">
    <interactant intactId="EBI-1051880">
        <id>Q12874</id>
    </interactant>
    <interactant intactId="EBI-2462271">
        <id>Q15428</id>
        <label>SF3A2</label>
    </interactant>
    <organismsDiffer>false</organismsDiffer>
    <experiments>2</experiments>
</comment>
<comment type="interaction">
    <interactant intactId="EBI-1051880">
        <id>Q12874</id>
    </interactant>
    <interactant intactId="EBI-346977">
        <id>Q15393</id>
        <label>SF3B3</label>
    </interactant>
    <organismsDiffer>false</organismsDiffer>
    <experiments>3</experiments>
</comment>
<comment type="interaction">
    <interactant intactId="EBI-1051880">
        <id>Q12874</id>
    </interactant>
    <interactant intactId="EBI-742268">
        <id>O75478</id>
        <label>TADA2A</label>
    </interactant>
    <organismsDiffer>false</organismsDiffer>
    <experiments>3</experiments>
</comment>
<comment type="interaction">
    <interactant intactId="EBI-1051880">
        <id>Q12874</id>
    </interactant>
    <interactant intactId="EBI-749955">
        <id>Q86WT6</id>
        <label>TRIM69</label>
    </interactant>
    <organismsDiffer>false</organismsDiffer>
    <experiments>3</experiments>
</comment>
<comment type="interaction">
    <interactant intactId="EBI-1051880">
        <id>Q12874</id>
    </interactant>
    <interactant intactId="EBI-1640204">
        <id>Q9UDV6</id>
        <label>ZNF212</label>
    </interactant>
    <organismsDiffer>false</organismsDiffer>
    <experiments>4</experiments>
</comment>
<comment type="interaction">
    <interactant intactId="EBI-1051880">
        <id>Q12874</id>
    </interactant>
    <interactant intactId="EBI-6248094">
        <id>Q9Q2G4</id>
        <label>ORF</label>
    </interactant>
    <organismsDiffer>true</organismsDiffer>
    <experiments>3</experiments>
</comment>
<comment type="subcellular location">
    <subcellularLocation>
        <location evidence="14">Nucleus speckle</location>
    </subcellularLocation>
    <subcellularLocation>
        <location evidence="3 7 8 9">Nucleus</location>
    </subcellularLocation>
</comment>
<comment type="tissue specificity">
    <text evidence="13">Ubiquitous.</text>
</comment>
<comment type="similarity">
    <text evidence="19">Belongs to the SF3A3 family.</text>
</comment>